<accession>B5YL60</accession>
<protein>
    <recommendedName>
        <fullName evidence="1">Aspartyl/glutamyl-tRNA(Asn/Gln) amidotransferase subunit B</fullName>
        <shortName evidence="1">Asp/Glu-ADT subunit B</shortName>
        <ecNumber evidence="1">6.3.5.-</ecNumber>
    </recommendedName>
</protein>
<comment type="function">
    <text evidence="1">Allows the formation of correctly charged Asn-tRNA(Asn) or Gln-tRNA(Gln) through the transamidation of misacylated Asp-tRNA(Asn) or Glu-tRNA(Gln) in organisms which lack either or both of asparaginyl-tRNA or glutaminyl-tRNA synthetases. The reaction takes place in the presence of glutamine and ATP through an activated phospho-Asp-tRNA(Asn) or phospho-Glu-tRNA(Gln).</text>
</comment>
<comment type="catalytic activity">
    <reaction evidence="1">
        <text>L-glutamyl-tRNA(Gln) + L-glutamine + ATP + H2O = L-glutaminyl-tRNA(Gln) + L-glutamate + ADP + phosphate + H(+)</text>
        <dbReference type="Rhea" id="RHEA:17521"/>
        <dbReference type="Rhea" id="RHEA-COMP:9681"/>
        <dbReference type="Rhea" id="RHEA-COMP:9684"/>
        <dbReference type="ChEBI" id="CHEBI:15377"/>
        <dbReference type="ChEBI" id="CHEBI:15378"/>
        <dbReference type="ChEBI" id="CHEBI:29985"/>
        <dbReference type="ChEBI" id="CHEBI:30616"/>
        <dbReference type="ChEBI" id="CHEBI:43474"/>
        <dbReference type="ChEBI" id="CHEBI:58359"/>
        <dbReference type="ChEBI" id="CHEBI:78520"/>
        <dbReference type="ChEBI" id="CHEBI:78521"/>
        <dbReference type="ChEBI" id="CHEBI:456216"/>
    </reaction>
</comment>
<comment type="catalytic activity">
    <reaction evidence="1">
        <text>L-aspartyl-tRNA(Asn) + L-glutamine + ATP + H2O = L-asparaginyl-tRNA(Asn) + L-glutamate + ADP + phosphate + 2 H(+)</text>
        <dbReference type="Rhea" id="RHEA:14513"/>
        <dbReference type="Rhea" id="RHEA-COMP:9674"/>
        <dbReference type="Rhea" id="RHEA-COMP:9677"/>
        <dbReference type="ChEBI" id="CHEBI:15377"/>
        <dbReference type="ChEBI" id="CHEBI:15378"/>
        <dbReference type="ChEBI" id="CHEBI:29985"/>
        <dbReference type="ChEBI" id="CHEBI:30616"/>
        <dbReference type="ChEBI" id="CHEBI:43474"/>
        <dbReference type="ChEBI" id="CHEBI:58359"/>
        <dbReference type="ChEBI" id="CHEBI:78515"/>
        <dbReference type="ChEBI" id="CHEBI:78516"/>
        <dbReference type="ChEBI" id="CHEBI:456216"/>
    </reaction>
</comment>
<comment type="subunit">
    <text evidence="1">Heterotrimer of A, B and C subunits.</text>
</comment>
<comment type="similarity">
    <text evidence="1">Belongs to the GatB/GatE family. GatB subfamily.</text>
</comment>
<organism>
    <name type="scientific">Thermodesulfovibrio yellowstonii (strain ATCC 51303 / DSM 11347 / YP87)</name>
    <dbReference type="NCBI Taxonomy" id="289376"/>
    <lineage>
        <taxon>Bacteria</taxon>
        <taxon>Pseudomonadati</taxon>
        <taxon>Nitrospirota</taxon>
        <taxon>Thermodesulfovibrionia</taxon>
        <taxon>Thermodesulfovibrionales</taxon>
        <taxon>Thermodesulfovibrionaceae</taxon>
        <taxon>Thermodesulfovibrio</taxon>
    </lineage>
</organism>
<dbReference type="EC" id="6.3.5.-" evidence="1"/>
<dbReference type="EMBL" id="CP001147">
    <property type="protein sequence ID" value="ACI20681.1"/>
    <property type="molecule type" value="Genomic_DNA"/>
</dbReference>
<dbReference type="RefSeq" id="WP_012545415.1">
    <property type="nucleotide sequence ID" value="NC_011296.1"/>
</dbReference>
<dbReference type="RefSeq" id="YP_002248975.1">
    <property type="nucleotide sequence ID" value="NC_011296.1"/>
</dbReference>
<dbReference type="SMR" id="B5YL60"/>
<dbReference type="STRING" id="289376.THEYE_A1151"/>
<dbReference type="EnsemblBacteria" id="ACI20681">
    <property type="protein sequence ID" value="ACI20681"/>
    <property type="gene ID" value="THEYE_A1151"/>
</dbReference>
<dbReference type="KEGG" id="tye:THEYE_A1151"/>
<dbReference type="PATRIC" id="fig|289376.4.peg.1129"/>
<dbReference type="eggNOG" id="COG0064">
    <property type="taxonomic scope" value="Bacteria"/>
</dbReference>
<dbReference type="HOGENOM" id="CLU_019240_0_0_0"/>
<dbReference type="InParanoid" id="B5YL60"/>
<dbReference type="OrthoDB" id="9804078at2"/>
<dbReference type="Proteomes" id="UP000000718">
    <property type="component" value="Chromosome"/>
</dbReference>
<dbReference type="GO" id="GO:0050566">
    <property type="term" value="F:asparaginyl-tRNA synthase (glutamine-hydrolyzing) activity"/>
    <property type="evidence" value="ECO:0007669"/>
    <property type="project" value="RHEA"/>
</dbReference>
<dbReference type="GO" id="GO:0005524">
    <property type="term" value="F:ATP binding"/>
    <property type="evidence" value="ECO:0007669"/>
    <property type="project" value="UniProtKB-KW"/>
</dbReference>
<dbReference type="GO" id="GO:0050567">
    <property type="term" value="F:glutaminyl-tRNA synthase (glutamine-hydrolyzing) activity"/>
    <property type="evidence" value="ECO:0000318"/>
    <property type="project" value="GO_Central"/>
</dbReference>
<dbReference type="GO" id="GO:0070681">
    <property type="term" value="P:glutaminyl-tRNAGln biosynthesis via transamidation"/>
    <property type="evidence" value="ECO:0000318"/>
    <property type="project" value="GO_Central"/>
</dbReference>
<dbReference type="GO" id="GO:0006412">
    <property type="term" value="P:translation"/>
    <property type="evidence" value="ECO:0007669"/>
    <property type="project" value="UniProtKB-UniRule"/>
</dbReference>
<dbReference type="FunFam" id="1.10.10.410:FF:000001">
    <property type="entry name" value="Aspartyl/glutamyl-tRNA(Asn/Gln) amidotransferase subunit B"/>
    <property type="match status" value="1"/>
</dbReference>
<dbReference type="FunFam" id="1.10.150.380:FF:000001">
    <property type="entry name" value="Aspartyl/glutamyl-tRNA(Asn/Gln) amidotransferase subunit B"/>
    <property type="match status" value="1"/>
</dbReference>
<dbReference type="Gene3D" id="1.10.10.410">
    <property type="match status" value="1"/>
</dbReference>
<dbReference type="Gene3D" id="1.10.150.380">
    <property type="entry name" value="GatB domain, N-terminal subdomain"/>
    <property type="match status" value="1"/>
</dbReference>
<dbReference type="HAMAP" id="MF_00121">
    <property type="entry name" value="GatB"/>
    <property type="match status" value="1"/>
</dbReference>
<dbReference type="InterPro" id="IPR017959">
    <property type="entry name" value="Asn/Gln-tRNA_amidoTrfase_suB/E"/>
</dbReference>
<dbReference type="InterPro" id="IPR006075">
    <property type="entry name" value="Asn/Gln-tRNA_Trfase_suB/E_cat"/>
</dbReference>
<dbReference type="InterPro" id="IPR018027">
    <property type="entry name" value="Asn/Gln_amidotransferase"/>
</dbReference>
<dbReference type="InterPro" id="IPR003789">
    <property type="entry name" value="Asn/Gln_tRNA_amidoTrase-B-like"/>
</dbReference>
<dbReference type="InterPro" id="IPR004413">
    <property type="entry name" value="GatB"/>
</dbReference>
<dbReference type="InterPro" id="IPR042114">
    <property type="entry name" value="GatB_C_1"/>
</dbReference>
<dbReference type="InterPro" id="IPR023168">
    <property type="entry name" value="GatB_Yqey_C_2"/>
</dbReference>
<dbReference type="InterPro" id="IPR017958">
    <property type="entry name" value="Gln-tRNA_amidoTrfase_suB_CS"/>
</dbReference>
<dbReference type="InterPro" id="IPR014746">
    <property type="entry name" value="Gln_synth/guanido_kin_cat_dom"/>
</dbReference>
<dbReference type="NCBIfam" id="TIGR00133">
    <property type="entry name" value="gatB"/>
    <property type="match status" value="1"/>
</dbReference>
<dbReference type="NCBIfam" id="NF004012">
    <property type="entry name" value="PRK05477.1-2"/>
    <property type="match status" value="1"/>
</dbReference>
<dbReference type="NCBIfam" id="NF004014">
    <property type="entry name" value="PRK05477.1-4"/>
    <property type="match status" value="1"/>
</dbReference>
<dbReference type="NCBIfam" id="NF004015">
    <property type="entry name" value="PRK05477.1-5"/>
    <property type="match status" value="1"/>
</dbReference>
<dbReference type="PANTHER" id="PTHR11659">
    <property type="entry name" value="GLUTAMYL-TRNA GLN AMIDOTRANSFERASE SUBUNIT B MITOCHONDRIAL AND PROKARYOTIC PET112-RELATED"/>
    <property type="match status" value="1"/>
</dbReference>
<dbReference type="PANTHER" id="PTHR11659:SF0">
    <property type="entry name" value="GLUTAMYL-TRNA(GLN) AMIDOTRANSFERASE SUBUNIT B, MITOCHONDRIAL"/>
    <property type="match status" value="1"/>
</dbReference>
<dbReference type="Pfam" id="PF02934">
    <property type="entry name" value="GatB_N"/>
    <property type="match status" value="1"/>
</dbReference>
<dbReference type="Pfam" id="PF02637">
    <property type="entry name" value="GatB_Yqey"/>
    <property type="match status" value="1"/>
</dbReference>
<dbReference type="SMART" id="SM00845">
    <property type="entry name" value="GatB_Yqey"/>
    <property type="match status" value="1"/>
</dbReference>
<dbReference type="SUPFAM" id="SSF89095">
    <property type="entry name" value="GatB/YqeY motif"/>
    <property type="match status" value="1"/>
</dbReference>
<dbReference type="SUPFAM" id="SSF55931">
    <property type="entry name" value="Glutamine synthetase/guanido kinase"/>
    <property type="match status" value="1"/>
</dbReference>
<dbReference type="PROSITE" id="PS01234">
    <property type="entry name" value="GATB"/>
    <property type="match status" value="1"/>
</dbReference>
<sequence>MQYEAVIGLEVHAQLLTESKIFCGCSTQFGAEPNTQVCPVCLGMPGVLPVLNKKAVEYTVKTGLAMNCKIAPYSRFARKNYFYPDLPKGYQISQYELPLCEDGYLEIMLNGTKRKIRIKRIHLEEDAGKNIHDPSGYSFVDFNRTGVPLMEIVSEPDIRSPKEAALYMKKLRAILRYLGVCDGNLEQGSLRCDANVSVRPVGSTEFGVKTEIKNINSFRFVEKALEYEIKRQIKLIENGEKIIQETRLWDSQTGTTQSMRSKEEAHDYRYFPEPDLVPVVVSEDWIEKIKKDMPELPDQKIERFIKEYGLPQYDSEILTEEKALSEWFEEAVKLGGKPKEVANWIMVELLRLLNEEGKDINECSLKPIQLVELIELINKGTINRNTAKEVFEEMYKTGKTAEAIVREKGLTQISDDSVIIEAIKEVMNKNPKEVERFRNGEEKLIGFFVGQVMKITKGKANPKLVNELIFKILKE</sequence>
<name>GATB_THEYD</name>
<gene>
    <name evidence="1" type="primary">gatB</name>
    <name type="ordered locus">THEYE_A1151</name>
</gene>
<proteinExistence type="inferred from homology"/>
<feature type="chain" id="PRO_1000117624" description="Aspartyl/glutamyl-tRNA(Asn/Gln) amidotransferase subunit B">
    <location>
        <begin position="1"/>
        <end position="475"/>
    </location>
</feature>
<keyword id="KW-0067">ATP-binding</keyword>
<keyword id="KW-0436">Ligase</keyword>
<keyword id="KW-0547">Nucleotide-binding</keyword>
<keyword id="KW-0648">Protein biosynthesis</keyword>
<keyword id="KW-1185">Reference proteome</keyword>
<reference key="1">
    <citation type="submission" date="2008-08" db="EMBL/GenBank/DDBJ databases">
        <title>The complete genome sequence of Thermodesulfovibrio yellowstonii strain ATCC 51303 / DSM 11347 / YP87.</title>
        <authorList>
            <person name="Dodson R.J."/>
            <person name="Durkin A.S."/>
            <person name="Wu M."/>
            <person name="Eisen J."/>
            <person name="Sutton G."/>
        </authorList>
    </citation>
    <scope>NUCLEOTIDE SEQUENCE [LARGE SCALE GENOMIC DNA]</scope>
    <source>
        <strain>ATCC 51303 / DSM 11347 / YP87</strain>
    </source>
</reference>
<evidence type="ECO:0000255" key="1">
    <source>
        <dbReference type="HAMAP-Rule" id="MF_00121"/>
    </source>
</evidence>